<sequence>MEEIQNLKKKNYKSVQKNYSEDYLGLDFSYQGLKHLSYSLFQLTFIKELNLKGNDLENIPGDIYILKNLEILNLSKNKIKFLPAKIGKMINLKELYLSDNFISNIPMELGSLYNCTVFEINNNPLISPFNLLYKDKKLLQYCREHNTNYGPPADRTWLDTVIKKDMSEITFSCGTYNILSNYSAVRLGYPPTWVLNPDYRKENILHNICSINVDILCLQEVETYNYEDFYKDQLELRCEYSSVFQPKGRSKNLTDSKSVDGCATFWKKSKFKIKENLVIDFYSKFINDYRFNKNINLVSRYGKKDNIALISIFEISQTKQTLIVVNVHLYWDPEYEDIKFVQAIILLEELEKVSKCYKNPSIVLLGDFNSLQNSSVYSFITQNSVSNTNLCKYNIGFIPGHFLKLSDAYLSEENDFTNFTPTFKGVIDFIFYSDTLELRSILSTIENEYCDQVVGLPNIHFPSDHIFLASKFKLKK</sequence>
<evidence type="ECO:0000250" key="1"/>
<evidence type="ECO:0000250" key="2">
    <source>
        <dbReference type="UniProtKB" id="O95551"/>
    </source>
</evidence>
<evidence type="ECO:0000250" key="3">
    <source>
        <dbReference type="UniProtKB" id="P31384"/>
    </source>
</evidence>
<evidence type="ECO:0000305" key="4"/>
<feature type="chain" id="PRO_0000388441" description="Probable CCR4-Not complex 3'-5'-exoribonuclease subunit Ccr4">
    <location>
        <begin position="1"/>
        <end position="476"/>
    </location>
</feature>
<feature type="repeat" description="LRR 1">
    <location>
        <begin position="22"/>
        <end position="43"/>
    </location>
</feature>
<feature type="repeat" description="LRR 2">
    <location>
        <begin position="45"/>
        <end position="66"/>
    </location>
</feature>
<feature type="repeat" description="LRR 3">
    <location>
        <begin position="68"/>
        <end position="89"/>
    </location>
</feature>
<feature type="repeat" description="LRR 4">
    <location>
        <begin position="91"/>
        <end position="113"/>
    </location>
</feature>
<feature type="repeat" description="LRR 5">
    <location>
        <begin position="114"/>
        <end position="135"/>
    </location>
</feature>
<feature type="binding site" evidence="2">
    <location>
        <position position="220"/>
    </location>
    <ligand>
        <name>Mg(2+)</name>
        <dbReference type="ChEBI" id="CHEBI:18420"/>
    </ligand>
</feature>
<proteinExistence type="inferred from homology"/>
<reference key="1">
    <citation type="journal article" date="2009" name="PLoS Pathog.">
        <title>Genomic analyses of the microsporidian Nosema ceranae, an emergent pathogen of honey bees.</title>
        <authorList>
            <person name="Cornman R.S."/>
            <person name="Chen Y.P."/>
            <person name="Schatz M.C."/>
            <person name="Street C."/>
            <person name="Zhao Y."/>
            <person name="Desany B."/>
            <person name="Egholm M."/>
            <person name="Hutchison S."/>
            <person name="Pettis J.S."/>
            <person name="Lipkin W.I."/>
            <person name="Evans J.D."/>
        </authorList>
    </citation>
    <scope>NUCLEOTIDE SEQUENCE [LARGE SCALE GENOMIC DNA]</scope>
    <source>
        <strain>BRL01</strain>
    </source>
</reference>
<gene>
    <name type="primary">CCR4</name>
    <name type="ORF">NCER_100420</name>
</gene>
<organism>
    <name type="scientific">Vairimorpha ceranae (strain BRL01)</name>
    <name type="common">Microsporidian parasite</name>
    <name type="synonym">Nosema ceranae</name>
    <dbReference type="NCBI Taxonomy" id="578460"/>
    <lineage>
        <taxon>Eukaryota</taxon>
        <taxon>Fungi</taxon>
        <taxon>Fungi incertae sedis</taxon>
        <taxon>Microsporidia</taxon>
        <taxon>Nosematidae</taxon>
        <taxon>Vairimorpha</taxon>
    </lineage>
</organism>
<protein>
    <recommendedName>
        <fullName evidence="4">Probable CCR4-Not complex 3'-5'-exoribonuclease subunit Ccr4</fullName>
        <ecNumber>3.1.13.4</ecNumber>
    </recommendedName>
    <alternativeName>
        <fullName>Carbon catabolite repressor protein 4</fullName>
    </alternativeName>
    <alternativeName>
        <fullName>Cytoplasmic deadenylase</fullName>
    </alternativeName>
    <alternativeName>
        <fullName>Glucose-repressible alcohol dehydrogenase transcriptional effector</fullName>
    </alternativeName>
</protein>
<name>CCR4_VAIC1</name>
<comment type="function">
    <text evidence="3">Acts as a catalytic component of the CCR4-NOT core complex, which in the nucleus seems to be a general transcription factor, and in the cytoplasm the major mRNA deadenylase involved in mRNA turnover (By similarity). Ccr4 has 3'-5' RNase activity with a strong preference for polyadenylated substrates and also low exonuclease activity towards single-stranded DNA (By similarity).</text>
</comment>
<comment type="catalytic activity">
    <reaction>
        <text>Exonucleolytic cleavage of poly(A) to 5'-AMP.</text>
        <dbReference type="EC" id="3.1.13.4"/>
    </reaction>
</comment>
<comment type="cofactor">
    <cofactor evidence="1">
        <name>Mg(2+)</name>
        <dbReference type="ChEBI" id="CHEBI:18420"/>
    </cofactor>
</comment>
<comment type="subunit">
    <text evidence="1">Component of the CCR4-NOT core complex.</text>
</comment>
<comment type="subcellular location">
    <subcellularLocation>
        <location evidence="1">Cytoplasm</location>
    </subcellularLocation>
    <subcellularLocation>
        <location evidence="1">Nucleus</location>
    </subcellularLocation>
</comment>
<comment type="similarity">
    <text evidence="4">Belongs to the CCR4/nocturin family.</text>
</comment>
<accession>C4V7I7</accession>
<dbReference type="EC" id="3.1.13.4"/>
<dbReference type="EMBL" id="ACOL01000021">
    <property type="protein sequence ID" value="EEQ82814.1"/>
    <property type="molecule type" value="Genomic_DNA"/>
</dbReference>
<dbReference type="RefSeq" id="XP_002996485.1">
    <property type="nucleotide sequence ID" value="XM_002996439.1"/>
</dbReference>
<dbReference type="SMR" id="C4V7I7"/>
<dbReference type="FunCoup" id="C4V7I7">
    <property type="interactions" value="144"/>
</dbReference>
<dbReference type="STRING" id="578460.C4V7I7"/>
<dbReference type="KEGG" id="nce:NCER_100420"/>
<dbReference type="VEuPathDB" id="MicrosporidiaDB:NCER_100420"/>
<dbReference type="HOGENOM" id="CLU_016428_4_2_1"/>
<dbReference type="InParanoid" id="C4V7I7"/>
<dbReference type="OMA" id="EHRMVAP"/>
<dbReference type="OrthoDB" id="1199at6029"/>
<dbReference type="Proteomes" id="UP000009082">
    <property type="component" value="Unassembled WGS sequence"/>
</dbReference>
<dbReference type="GO" id="GO:0005737">
    <property type="term" value="C:cytoplasm"/>
    <property type="evidence" value="ECO:0007669"/>
    <property type="project" value="UniProtKB-SubCell"/>
</dbReference>
<dbReference type="GO" id="GO:0005634">
    <property type="term" value="C:nucleus"/>
    <property type="evidence" value="ECO:0007669"/>
    <property type="project" value="UniProtKB-SubCell"/>
</dbReference>
<dbReference type="GO" id="GO:0046872">
    <property type="term" value="F:metal ion binding"/>
    <property type="evidence" value="ECO:0007669"/>
    <property type="project" value="UniProtKB-KW"/>
</dbReference>
<dbReference type="GO" id="GO:0004535">
    <property type="term" value="F:poly(A)-specific ribonuclease activity"/>
    <property type="evidence" value="ECO:0007669"/>
    <property type="project" value="UniProtKB-EC"/>
</dbReference>
<dbReference type="GO" id="GO:0003723">
    <property type="term" value="F:RNA binding"/>
    <property type="evidence" value="ECO:0007669"/>
    <property type="project" value="UniProtKB-KW"/>
</dbReference>
<dbReference type="Gene3D" id="3.60.10.10">
    <property type="entry name" value="Endonuclease/exonuclease/phosphatase"/>
    <property type="match status" value="1"/>
</dbReference>
<dbReference type="Gene3D" id="3.80.10.10">
    <property type="entry name" value="Ribonuclease Inhibitor"/>
    <property type="match status" value="1"/>
</dbReference>
<dbReference type="InterPro" id="IPR050410">
    <property type="entry name" value="CCR4/nocturin_mRNA_transcr"/>
</dbReference>
<dbReference type="InterPro" id="IPR036691">
    <property type="entry name" value="Endo/exonu/phosph_ase_sf"/>
</dbReference>
<dbReference type="InterPro" id="IPR005135">
    <property type="entry name" value="Endo/exonuclease/phosphatase"/>
</dbReference>
<dbReference type="InterPro" id="IPR001611">
    <property type="entry name" value="Leu-rich_rpt"/>
</dbReference>
<dbReference type="InterPro" id="IPR003591">
    <property type="entry name" value="Leu-rich_rpt_typical-subtyp"/>
</dbReference>
<dbReference type="InterPro" id="IPR032675">
    <property type="entry name" value="LRR_dom_sf"/>
</dbReference>
<dbReference type="PANTHER" id="PTHR12121">
    <property type="entry name" value="CARBON CATABOLITE REPRESSOR PROTEIN 4"/>
    <property type="match status" value="1"/>
</dbReference>
<dbReference type="PANTHER" id="PTHR12121:SF100">
    <property type="entry name" value="POLY(A)-SPECIFIC RIBONUCLEASE"/>
    <property type="match status" value="1"/>
</dbReference>
<dbReference type="Pfam" id="PF03372">
    <property type="entry name" value="Exo_endo_phos"/>
    <property type="match status" value="1"/>
</dbReference>
<dbReference type="Pfam" id="PF13855">
    <property type="entry name" value="LRR_8"/>
    <property type="match status" value="1"/>
</dbReference>
<dbReference type="SMART" id="SM00369">
    <property type="entry name" value="LRR_TYP"/>
    <property type="match status" value="3"/>
</dbReference>
<dbReference type="SUPFAM" id="SSF56219">
    <property type="entry name" value="DNase I-like"/>
    <property type="match status" value="1"/>
</dbReference>
<dbReference type="SUPFAM" id="SSF52075">
    <property type="entry name" value="Outer arm dynein light chain 1"/>
    <property type="match status" value="1"/>
</dbReference>
<dbReference type="PROSITE" id="PS51450">
    <property type="entry name" value="LRR"/>
    <property type="match status" value="3"/>
</dbReference>
<keyword id="KW-0010">Activator</keyword>
<keyword id="KW-0963">Cytoplasm</keyword>
<keyword id="KW-0269">Exonuclease</keyword>
<keyword id="KW-0378">Hydrolase</keyword>
<keyword id="KW-0433">Leucine-rich repeat</keyword>
<keyword id="KW-0460">Magnesium</keyword>
<keyword id="KW-0479">Metal-binding</keyword>
<keyword id="KW-0540">Nuclease</keyword>
<keyword id="KW-0539">Nucleus</keyword>
<keyword id="KW-1185">Reference proteome</keyword>
<keyword id="KW-0677">Repeat</keyword>
<keyword id="KW-0678">Repressor</keyword>
<keyword id="KW-0694">RNA-binding</keyword>
<keyword id="KW-0804">Transcription</keyword>
<keyword id="KW-0805">Transcription regulation</keyword>